<accession>P68200</accession>
<accession>P68199</accession>
<accession>Q90YP4</accession>
<evidence type="ECO:0000250" key="1"/>
<evidence type="ECO:0000250" key="2">
    <source>
        <dbReference type="UniProtKB" id="P62979"/>
    </source>
</evidence>
<evidence type="ECO:0000255" key="3">
    <source>
        <dbReference type="PROSITE-ProRule" id="PRU00214"/>
    </source>
</evidence>
<evidence type="ECO:0000256" key="4">
    <source>
        <dbReference type="SAM" id="MobiDB-lite"/>
    </source>
</evidence>
<evidence type="ECO:0000305" key="5"/>
<proteinExistence type="evidence at transcript level"/>
<name>RS27A_ICTPU</name>
<sequence>MQIFVKTLTGKTITLEVEPSDTIENVKAKIQDKEGIPPDQQRLIFAGKQLEDGRTLSDYNIQKESTLHLVLRLRGGAKKRKKKSYTTPKKNKHKRKKVKLAVLKYYKVDENGKIHRLRRECPADECGAGVFMASHFDRHYCGKCCLTYCFNKPEDK</sequence>
<protein>
    <recommendedName>
        <fullName evidence="5">Ubiquitin-ribosomal protein eS31 fusion protein</fullName>
    </recommendedName>
    <alternativeName>
        <fullName>Ubiquitin carboxyl extension protein 80</fullName>
    </alternativeName>
    <component>
        <recommendedName>
            <fullName>Ubiquitin</fullName>
        </recommendedName>
    </component>
    <component>
        <recommendedName>
            <fullName evidence="5">Small ribosomal subunit protein eS31</fullName>
        </recommendedName>
        <alternativeName>
            <fullName>40S ribosomal protein S27a</fullName>
        </alternativeName>
    </component>
</protein>
<organism>
    <name type="scientific">Ictalurus punctatus</name>
    <name type="common">Channel catfish</name>
    <name type="synonym">Silurus punctatus</name>
    <dbReference type="NCBI Taxonomy" id="7998"/>
    <lineage>
        <taxon>Eukaryota</taxon>
        <taxon>Metazoa</taxon>
        <taxon>Chordata</taxon>
        <taxon>Craniata</taxon>
        <taxon>Vertebrata</taxon>
        <taxon>Euteleostomi</taxon>
        <taxon>Actinopterygii</taxon>
        <taxon>Neopterygii</taxon>
        <taxon>Teleostei</taxon>
        <taxon>Ostariophysi</taxon>
        <taxon>Siluriformes</taxon>
        <taxon>Ictaluridae</taxon>
        <taxon>Ictalurus</taxon>
    </lineage>
</organism>
<gene>
    <name type="primary">rps27a</name>
    <name type="synonym">uba80</name>
</gene>
<reference key="1">
    <citation type="journal article" date="2002" name="Gene">
        <title>Translational machinery of channel catfish: I. A transcriptomic approach to the analysis of 32 40S ribosomal protein genes and their expression.</title>
        <authorList>
            <person name="Karsi A."/>
            <person name="Patterson A."/>
            <person name="Feng J."/>
            <person name="Liu Z.-J."/>
        </authorList>
    </citation>
    <scope>NUCLEOTIDE SEQUENCE [MRNA]</scope>
</reference>
<dbReference type="EMBL" id="AF402838">
    <property type="protein sequence ID" value="AAK95212.1"/>
    <property type="molecule type" value="mRNA"/>
</dbReference>
<dbReference type="RefSeq" id="NP_001187222.1">
    <property type="nucleotide sequence ID" value="NM_001200293.1"/>
</dbReference>
<dbReference type="SMR" id="P68200"/>
<dbReference type="STRING" id="7998.ENSIPUP00000022626"/>
<dbReference type="Ensembl" id="ENSIPUT00015055565">
    <property type="protein sequence ID" value="ENSIPUP00015048591"/>
    <property type="gene ID" value="ENSIPUG00015022480"/>
</dbReference>
<dbReference type="GeneID" id="100305059"/>
<dbReference type="KEGG" id="ipu:100305059"/>
<dbReference type="CTD" id="6233"/>
<dbReference type="OMA" id="GVFMAFH"/>
<dbReference type="OrthoDB" id="428577at2759"/>
<dbReference type="Proteomes" id="UP000221080">
    <property type="component" value="Chromosome 29"/>
</dbReference>
<dbReference type="GO" id="GO:0005737">
    <property type="term" value="C:cytoplasm"/>
    <property type="evidence" value="ECO:0007669"/>
    <property type="project" value="UniProtKB-SubCell"/>
</dbReference>
<dbReference type="GO" id="GO:0005730">
    <property type="term" value="C:nucleolus"/>
    <property type="evidence" value="ECO:0007669"/>
    <property type="project" value="UniProtKB-SubCell"/>
</dbReference>
<dbReference type="GO" id="GO:0005840">
    <property type="term" value="C:ribosome"/>
    <property type="evidence" value="ECO:0007669"/>
    <property type="project" value="UniProtKB-KW"/>
</dbReference>
<dbReference type="GO" id="GO:0032040">
    <property type="term" value="C:small-subunit processome"/>
    <property type="evidence" value="ECO:0000250"/>
    <property type="project" value="UniProtKB"/>
</dbReference>
<dbReference type="GO" id="GO:0003735">
    <property type="term" value="F:structural constituent of ribosome"/>
    <property type="evidence" value="ECO:0007669"/>
    <property type="project" value="InterPro"/>
</dbReference>
<dbReference type="GO" id="GO:0008270">
    <property type="term" value="F:zinc ion binding"/>
    <property type="evidence" value="ECO:0007669"/>
    <property type="project" value="UniProtKB-KW"/>
</dbReference>
<dbReference type="GO" id="GO:0042274">
    <property type="term" value="P:ribosomal small subunit biogenesis"/>
    <property type="evidence" value="ECO:0000250"/>
    <property type="project" value="UniProtKB"/>
</dbReference>
<dbReference type="GO" id="GO:0006412">
    <property type="term" value="P:translation"/>
    <property type="evidence" value="ECO:0007669"/>
    <property type="project" value="InterPro"/>
</dbReference>
<dbReference type="CDD" id="cd01803">
    <property type="entry name" value="Ubl_ubiquitin"/>
    <property type="match status" value="1"/>
</dbReference>
<dbReference type="FunFam" id="3.10.20.90:FF:000008">
    <property type="entry name" value="Ubiquitin-40S ribosomal protein S27a"/>
    <property type="match status" value="1"/>
</dbReference>
<dbReference type="Gene3D" id="6.20.50.150">
    <property type="match status" value="1"/>
</dbReference>
<dbReference type="Gene3D" id="3.10.20.90">
    <property type="entry name" value="Phosphatidylinositol 3-kinase Catalytic Subunit, Chain A, domain 1"/>
    <property type="match status" value="1"/>
</dbReference>
<dbReference type="InterPro" id="IPR002906">
    <property type="entry name" value="Ribosomal_eS31"/>
</dbReference>
<dbReference type="InterPro" id="IPR038582">
    <property type="entry name" value="Ribosomal_eS31_euk-type_sf"/>
</dbReference>
<dbReference type="InterPro" id="IPR011332">
    <property type="entry name" value="Ribosomal_zn-bd"/>
</dbReference>
<dbReference type="InterPro" id="IPR000626">
    <property type="entry name" value="Ubiquitin-like_dom"/>
</dbReference>
<dbReference type="InterPro" id="IPR029071">
    <property type="entry name" value="Ubiquitin-like_domsf"/>
</dbReference>
<dbReference type="InterPro" id="IPR019954">
    <property type="entry name" value="Ubiquitin_CS"/>
</dbReference>
<dbReference type="InterPro" id="IPR019956">
    <property type="entry name" value="Ubiquitin_dom"/>
</dbReference>
<dbReference type="InterPro" id="IPR050158">
    <property type="entry name" value="Ubiquitin_ubiquitin-like"/>
</dbReference>
<dbReference type="PANTHER" id="PTHR10666">
    <property type="entry name" value="UBIQUITIN"/>
    <property type="match status" value="1"/>
</dbReference>
<dbReference type="Pfam" id="PF01599">
    <property type="entry name" value="Ribosomal_S27"/>
    <property type="match status" value="1"/>
</dbReference>
<dbReference type="Pfam" id="PF00240">
    <property type="entry name" value="ubiquitin"/>
    <property type="match status" value="1"/>
</dbReference>
<dbReference type="PRINTS" id="PR00348">
    <property type="entry name" value="UBIQUITIN"/>
</dbReference>
<dbReference type="SMART" id="SM01402">
    <property type="entry name" value="Ribosomal_S27"/>
    <property type="match status" value="1"/>
</dbReference>
<dbReference type="SMART" id="SM00213">
    <property type="entry name" value="UBQ"/>
    <property type="match status" value="1"/>
</dbReference>
<dbReference type="SUPFAM" id="SSF54236">
    <property type="entry name" value="Ubiquitin-like"/>
    <property type="match status" value="1"/>
</dbReference>
<dbReference type="SUPFAM" id="SSF57829">
    <property type="entry name" value="Zn-binding ribosomal proteins"/>
    <property type="match status" value="1"/>
</dbReference>
<dbReference type="PROSITE" id="PS00299">
    <property type="entry name" value="UBIQUITIN_1"/>
    <property type="match status" value="1"/>
</dbReference>
<dbReference type="PROSITE" id="PS50053">
    <property type="entry name" value="UBIQUITIN_2"/>
    <property type="match status" value="1"/>
</dbReference>
<comment type="function">
    <molecule>Ubiquitin</molecule>
    <text evidence="2">Ubiquitin Exists either covalently attached to another protein, or free (unanchored). When covalently bound, it is conjugated to target proteins via an isopeptide bond either as a monomer (monoubiquitin), a polymer linked via different Lys residues of the ubiquitin (polyubiquitin chains) or a linear polymer linked via the initiator Met of the ubiquitin (linear polyubiquitin chains). Polyubiquitin chains, when attached to a target protein, have different functions depending on the Lys residue of the ubiquitin that is linked: Lys-6-linked may be involved in DNA repair; Lys-11-linked is involved in ERAD (endoplasmic reticulum-associated degradation) and in cell-cycle regulation; Lys-29-linked is involved in proteotoxic stress response and cell cycle; Lys-33-linked is involved in kinase modification; Lys-48-linked is involved in protein degradation via the proteasome; Lys-63-linked is involved in endocytosis, DNA-damage responses as well as in signaling processes leading to activation of the transcription factor NF-kappa-B. Linear polymer chains formed via attachment by the initiator Met lead to cell signaling. Ubiquitin is usually conjugated to Lys residues of target proteins, however, in rare cases, conjugation to Cys or Ser residues has been observed. When polyubiquitin is free (unanchored-polyubiquitin), it also has distinct roles, such as in activation of protein kinases, and in signaling.</text>
</comment>
<comment type="function">
    <molecule>Small ribosomal subunit protein eS31</molecule>
    <text evidence="2">Component of the 40S subunit of the ribosome. Part of the small subunit (SSU) processome, first precursor of the small eukaryotic ribosomal subunit. During the assembly of the SSU processome in the nucleolus, many ribosome biogenesis factors, an RNA chaperone and ribosomal proteins associate with the nascent pre-rRNA and work in concert to generate RNA folding, modifications, rearrangements and cleavage as well as targeted degradation of pre-ribosomal RNA by the RNA exosome.</text>
</comment>
<comment type="subunit">
    <molecule>Small ribosomal subunit protein eS31</molecule>
    <text evidence="2">Part of the 40S ribosomal subunit. Part of the small subunit (SSU) processome, composed of more than 70 proteins and the RNA chaperone small nucleolar RNA (snoRNA) U3.</text>
</comment>
<comment type="subcellular location">
    <molecule>Ubiquitin</molecule>
    <subcellularLocation>
        <location evidence="1">Cytoplasm</location>
    </subcellularLocation>
    <subcellularLocation>
        <location evidence="1">Nucleus</location>
    </subcellularLocation>
</comment>
<comment type="subcellular location">
    <molecule>Small ribosomal subunit protein eS31</molecule>
    <subcellularLocation>
        <location evidence="2">Nucleus</location>
        <location evidence="2">Nucleolus</location>
    </subcellularLocation>
</comment>
<comment type="miscellaneous">
    <text>Ubiquitin is synthesized as a polyubiquitin precursor with exact head to tail repeats, the number of repeats differ between species. In some species there is a final amino-acid after the last repeat. Some ubiquitin genes contain a single copy of ubiquitin fused to a ribosomal protein (either eL40 or eS31).</text>
</comment>
<comment type="similarity">
    <text evidence="5">In the N-terminal section; belongs to the ubiquitin family.</text>
</comment>
<comment type="similarity">
    <text evidence="5">In the C-terminal section; belongs to the eukaryotic ribosomal protein eS31 family.</text>
</comment>
<feature type="chain" id="PRO_0000114809" description="Ubiquitin">
    <location>
        <begin position="1"/>
        <end position="76"/>
    </location>
</feature>
<feature type="chain" id="PRO_0000137666" description="Small ribosomal subunit protein eS31">
    <location>
        <begin position="77"/>
        <end position="156"/>
    </location>
</feature>
<feature type="domain" description="Ubiquitin-like" evidence="3">
    <location>
        <begin position="1"/>
        <end position="76"/>
    </location>
</feature>
<feature type="zinc finger region" description="C4-type">
    <location>
        <begin position="121"/>
        <end position="144"/>
    </location>
</feature>
<feature type="region of interest" description="Disordered" evidence="4">
    <location>
        <begin position="75"/>
        <end position="95"/>
    </location>
</feature>
<feature type="site" description="Interacts with activating enzyme">
    <location>
        <position position="54"/>
    </location>
</feature>
<feature type="site" description="Essential for function">
    <location>
        <position position="68"/>
    </location>
</feature>
<feature type="site" description="Interacts with activating enzyme">
    <location>
        <position position="72"/>
    </location>
</feature>
<feature type="cross-link" description="Glycyl lysine isopeptide (Lys-Gly) (interchain with G-Cter in ubiquitin)" evidence="2">
    <location>
        <position position="6"/>
    </location>
</feature>
<feature type="cross-link" description="Glycyl lysine isopeptide (Lys-Gly) (interchain with G-Cter in ubiquitin)" evidence="2">
    <location>
        <position position="11"/>
    </location>
</feature>
<feature type="cross-link" description="Glycyl lysine isopeptide (Lys-Gly) (interchain with G-Cter in ubiquitin)" evidence="2">
    <location>
        <position position="27"/>
    </location>
</feature>
<feature type="cross-link" description="Glycyl lysine isopeptide (Lys-Gly) (interchain with G-Cter in ubiquitin)" evidence="2">
    <location>
        <position position="29"/>
    </location>
</feature>
<feature type="cross-link" description="Glycyl lysine isopeptide (Lys-Gly) (interchain with G-Cter in ubiquitin)" evidence="2">
    <location>
        <position position="33"/>
    </location>
</feature>
<feature type="cross-link" description="Glycyl lysine isopeptide (Lys-Gly) (interchain with G-Cter in ubiquitin)" evidence="2">
    <location>
        <position position="48"/>
    </location>
</feature>
<feature type="cross-link" description="Glycyl lysine isopeptide (Lys-Gly) (interchain with G-Cter in ubiquitin)" evidence="2">
    <location>
        <position position="63"/>
    </location>
</feature>
<feature type="cross-link" description="Glycyl lysine isopeptide (Gly-Lys) (interchain with K-? in acceptor proteins)" evidence="3">
    <location>
        <position position="76"/>
    </location>
</feature>
<keyword id="KW-0963">Cytoplasm</keyword>
<keyword id="KW-1017">Isopeptide bond</keyword>
<keyword id="KW-0479">Metal-binding</keyword>
<keyword id="KW-0539">Nucleus</keyword>
<keyword id="KW-0687">Ribonucleoprotein</keyword>
<keyword id="KW-0689">Ribosomal protein</keyword>
<keyword id="KW-0832">Ubl conjugation</keyword>
<keyword id="KW-0862">Zinc</keyword>
<keyword id="KW-0863">Zinc-finger</keyword>